<proteinExistence type="inferred from homology"/>
<keyword id="KW-0012">Acyltransferase</keyword>
<keyword id="KW-0256">Endoplasmic reticulum</keyword>
<keyword id="KW-0449">Lipoprotein</keyword>
<keyword id="KW-0472">Membrane</keyword>
<keyword id="KW-0564">Palmitate</keyword>
<keyword id="KW-1185">Reference proteome</keyword>
<keyword id="KW-0808">Transferase</keyword>
<keyword id="KW-0812">Transmembrane</keyword>
<keyword id="KW-1133">Transmembrane helix</keyword>
<organism>
    <name type="scientific">Kluyveromyces lactis (strain ATCC 8585 / CBS 2359 / DSM 70799 / NBRC 1267 / NRRL Y-1140 / WM37)</name>
    <name type="common">Yeast</name>
    <name type="synonym">Candida sphaerica</name>
    <dbReference type="NCBI Taxonomy" id="284590"/>
    <lineage>
        <taxon>Eukaryota</taxon>
        <taxon>Fungi</taxon>
        <taxon>Dikarya</taxon>
        <taxon>Ascomycota</taxon>
        <taxon>Saccharomycotina</taxon>
        <taxon>Saccharomycetes</taxon>
        <taxon>Saccharomycetales</taxon>
        <taxon>Saccharomycetaceae</taxon>
        <taxon>Kluyveromyces</taxon>
    </lineage>
</organism>
<reference key="1">
    <citation type="journal article" date="2004" name="Nature">
        <title>Genome evolution in yeasts.</title>
        <authorList>
            <person name="Dujon B."/>
            <person name="Sherman D."/>
            <person name="Fischer G."/>
            <person name="Durrens P."/>
            <person name="Casaregola S."/>
            <person name="Lafontaine I."/>
            <person name="de Montigny J."/>
            <person name="Marck C."/>
            <person name="Neuveglise C."/>
            <person name="Talla E."/>
            <person name="Goffard N."/>
            <person name="Frangeul L."/>
            <person name="Aigle M."/>
            <person name="Anthouard V."/>
            <person name="Babour A."/>
            <person name="Barbe V."/>
            <person name="Barnay S."/>
            <person name="Blanchin S."/>
            <person name="Beckerich J.-M."/>
            <person name="Beyne E."/>
            <person name="Bleykasten C."/>
            <person name="Boisrame A."/>
            <person name="Boyer J."/>
            <person name="Cattolico L."/>
            <person name="Confanioleri F."/>
            <person name="de Daruvar A."/>
            <person name="Despons L."/>
            <person name="Fabre E."/>
            <person name="Fairhead C."/>
            <person name="Ferry-Dumazet H."/>
            <person name="Groppi A."/>
            <person name="Hantraye F."/>
            <person name="Hennequin C."/>
            <person name="Jauniaux N."/>
            <person name="Joyet P."/>
            <person name="Kachouri R."/>
            <person name="Kerrest A."/>
            <person name="Koszul R."/>
            <person name="Lemaire M."/>
            <person name="Lesur I."/>
            <person name="Ma L."/>
            <person name="Muller H."/>
            <person name="Nicaud J.-M."/>
            <person name="Nikolski M."/>
            <person name="Oztas S."/>
            <person name="Ozier-Kalogeropoulos O."/>
            <person name="Pellenz S."/>
            <person name="Potier S."/>
            <person name="Richard G.-F."/>
            <person name="Straub M.-L."/>
            <person name="Suleau A."/>
            <person name="Swennen D."/>
            <person name="Tekaia F."/>
            <person name="Wesolowski-Louvel M."/>
            <person name="Westhof E."/>
            <person name="Wirth B."/>
            <person name="Zeniou-Meyer M."/>
            <person name="Zivanovic Y."/>
            <person name="Bolotin-Fukuhara M."/>
            <person name="Thierry A."/>
            <person name="Bouchier C."/>
            <person name="Caudron B."/>
            <person name="Scarpelli C."/>
            <person name="Gaillardin C."/>
            <person name="Weissenbach J."/>
            <person name="Wincker P."/>
            <person name="Souciet J.-L."/>
        </authorList>
    </citation>
    <scope>NUCLEOTIDE SEQUENCE [LARGE SCALE GENOMIC DNA]</scope>
    <source>
        <strain>ATCC 8585 / CBS 2359 / DSM 70799 / NBRC 1267 / NRRL Y-1140 / WM37</strain>
    </source>
</reference>
<comment type="function">
    <text evidence="1">Mediates the reversible addition of palmitate to target proteins, thereby regulating their membrane association and biological function.</text>
</comment>
<comment type="catalytic activity">
    <reaction evidence="1">
        <text>L-cysteinyl-[protein] + hexadecanoyl-CoA = S-hexadecanoyl-L-cysteinyl-[protein] + CoA</text>
        <dbReference type="Rhea" id="RHEA:36683"/>
        <dbReference type="Rhea" id="RHEA-COMP:10131"/>
        <dbReference type="Rhea" id="RHEA-COMP:11032"/>
        <dbReference type="ChEBI" id="CHEBI:29950"/>
        <dbReference type="ChEBI" id="CHEBI:57287"/>
        <dbReference type="ChEBI" id="CHEBI:57379"/>
        <dbReference type="ChEBI" id="CHEBI:74151"/>
        <dbReference type="EC" id="2.3.1.225"/>
    </reaction>
</comment>
<comment type="subcellular location">
    <subcellularLocation>
        <location evidence="1">Endoplasmic reticulum membrane</location>
        <topology evidence="1">Multi-pass membrane protein</topology>
    </subcellularLocation>
</comment>
<comment type="domain">
    <text evidence="1">The DHHC domain is required for palmitoyltransferase activity.</text>
</comment>
<comment type="similarity">
    <text evidence="1">Belongs to the DHHC palmitoyltransferase family. PFA4 subfamily.</text>
</comment>
<protein>
    <recommendedName>
        <fullName evidence="1">Palmitoyltransferase PFA4</fullName>
        <ecNumber evidence="1">2.3.1.225</ecNumber>
    </recommendedName>
    <alternativeName>
        <fullName evidence="1">Protein S-acyltransferase</fullName>
        <shortName evidence="1">PAT</shortName>
    </alternativeName>
    <alternativeName>
        <fullName evidence="1">Protein fatty acyltransferase 4</fullName>
    </alternativeName>
</protein>
<sequence>MAIKLKNRWLGVAIPAFLVALIGYGSHYFILSNFLSWNEQIFYQTCQTMIWVSYYLAIYTNPGIPPKDFKPSAEEWHNYCKKCRVYKPERAHHCKTCNQCVLAMDHHCPWTLNCVGHSNFPHFMRFLFWVIFSTAYLLFLLIGRIYLLWSIRHTAFHHRSTSEIIFICIMTPMDAFVLLTVSSLLGRCIYNQCLHGMTQIESWEMDRIQSLHYKNRLLAQVIDRLVERRPEILPAKQHEINKLLSKRYVNQEDFTNFPYDVNPWTNINNAMGPWYLWLWPWSKPPTIGTSFAKNELFFYDPNSSIEDMLMSLPWPPDGLTHHSRALGSGSSIETIVSGGEQVIRDKSVDLRDRLGRNSWYNDWGEDLSDFGVDTELE</sequence>
<name>PFA4_KLULA</name>
<evidence type="ECO:0000255" key="1">
    <source>
        <dbReference type="HAMAP-Rule" id="MF_03199"/>
    </source>
</evidence>
<evidence type="ECO:0000255" key="2">
    <source>
        <dbReference type="PROSITE-ProRule" id="PRU00067"/>
    </source>
</evidence>
<feature type="chain" id="PRO_0000212968" description="Palmitoyltransferase PFA4">
    <location>
        <begin position="1"/>
        <end position="377"/>
    </location>
</feature>
<feature type="topological domain" description="Cytoplasmic" evidence="1">
    <location>
        <begin position="1"/>
        <end position="9"/>
    </location>
</feature>
<feature type="transmembrane region" description="Helical" evidence="1">
    <location>
        <begin position="10"/>
        <end position="30"/>
    </location>
</feature>
<feature type="topological domain" description="Lumenal" evidence="1">
    <location>
        <begin position="31"/>
        <end position="122"/>
    </location>
</feature>
<feature type="transmembrane region" description="Helical" evidence="1">
    <location>
        <begin position="123"/>
        <end position="143"/>
    </location>
</feature>
<feature type="topological domain" description="Cytoplasmic" evidence="1">
    <location>
        <begin position="144"/>
        <end position="163"/>
    </location>
</feature>
<feature type="transmembrane region" description="Helical" evidence="1">
    <location>
        <begin position="164"/>
        <end position="184"/>
    </location>
</feature>
<feature type="topological domain" description="Lumenal" evidence="1">
    <location>
        <begin position="185"/>
        <end position="377"/>
    </location>
</feature>
<feature type="domain" description="DHHC" evidence="2">
    <location>
        <begin position="78"/>
        <end position="128"/>
    </location>
</feature>
<feature type="active site" description="S-palmitoyl cysteine intermediate" evidence="1">
    <location>
        <position position="108"/>
    </location>
</feature>
<dbReference type="EC" id="2.3.1.225" evidence="1"/>
<dbReference type="EMBL" id="CR382123">
    <property type="protein sequence ID" value="CAH01325.1"/>
    <property type="molecule type" value="Genomic_DNA"/>
</dbReference>
<dbReference type="RefSeq" id="XP_452474.1">
    <property type="nucleotide sequence ID" value="XM_452474.1"/>
</dbReference>
<dbReference type="FunCoup" id="Q6CUB5">
    <property type="interactions" value="41"/>
</dbReference>
<dbReference type="STRING" id="284590.Q6CUB5"/>
<dbReference type="PaxDb" id="284590-Q6CUB5"/>
<dbReference type="KEGG" id="kla:KLLA0_C06204g"/>
<dbReference type="eggNOG" id="KOG1314">
    <property type="taxonomic scope" value="Eukaryota"/>
</dbReference>
<dbReference type="HOGENOM" id="CLU_027721_8_0_1"/>
<dbReference type="InParanoid" id="Q6CUB5"/>
<dbReference type="OMA" id="TMNCVGY"/>
<dbReference type="Proteomes" id="UP000000598">
    <property type="component" value="Chromosome C"/>
</dbReference>
<dbReference type="GO" id="GO:0005789">
    <property type="term" value="C:endoplasmic reticulum membrane"/>
    <property type="evidence" value="ECO:0007669"/>
    <property type="project" value="UniProtKB-SubCell"/>
</dbReference>
<dbReference type="GO" id="GO:0019706">
    <property type="term" value="F:protein-cysteine S-palmitoyltransferase activity"/>
    <property type="evidence" value="ECO:0007669"/>
    <property type="project" value="UniProtKB-UniRule"/>
</dbReference>
<dbReference type="HAMAP" id="MF_03199">
    <property type="entry name" value="DHHC_PAT_PFA4"/>
    <property type="match status" value="1"/>
</dbReference>
<dbReference type="InterPro" id="IPR001594">
    <property type="entry name" value="Palmitoyltrfase_DHHC"/>
</dbReference>
<dbReference type="InterPro" id="IPR033682">
    <property type="entry name" value="PFA4"/>
</dbReference>
<dbReference type="InterPro" id="IPR039859">
    <property type="entry name" value="PFA4/ZDH16/20/ERF2-like"/>
</dbReference>
<dbReference type="PANTHER" id="PTHR12246">
    <property type="entry name" value="PALMITOYLTRANSFERASE ZDHHC16"/>
    <property type="match status" value="1"/>
</dbReference>
<dbReference type="Pfam" id="PF01529">
    <property type="entry name" value="DHHC"/>
    <property type="match status" value="1"/>
</dbReference>
<dbReference type="PROSITE" id="PS50216">
    <property type="entry name" value="DHHC"/>
    <property type="match status" value="1"/>
</dbReference>
<accession>Q6CUB5</accession>
<gene>
    <name evidence="1" type="primary">PFA4</name>
    <name type="ordered locus">KLLA0C06204g</name>
</gene>